<organism>
    <name type="scientific">Haemophilus ducreyi (strain 35000HP / ATCC 700724)</name>
    <dbReference type="NCBI Taxonomy" id="233412"/>
    <lineage>
        <taxon>Bacteria</taxon>
        <taxon>Pseudomonadati</taxon>
        <taxon>Pseudomonadota</taxon>
        <taxon>Gammaproteobacteria</taxon>
        <taxon>Pasteurellales</taxon>
        <taxon>Pasteurellaceae</taxon>
        <taxon>Haemophilus</taxon>
    </lineage>
</organism>
<protein>
    <recommendedName>
        <fullName evidence="1">Ubiquinone/menaquinone biosynthesis C-methyltransferase UbiE</fullName>
        <ecNumber evidence="1">2.1.1.163</ecNumber>
        <ecNumber evidence="1">2.1.1.201</ecNumber>
    </recommendedName>
    <alternativeName>
        <fullName evidence="1">2-methoxy-6-polyprenyl-1,4-benzoquinol methylase</fullName>
    </alternativeName>
    <alternativeName>
        <fullName evidence="1">Demethylmenaquinone methyltransferase</fullName>
    </alternativeName>
</protein>
<proteinExistence type="inferred from homology"/>
<accession>P59911</accession>
<gene>
    <name evidence="1" type="primary">ubiE</name>
    <name type="ordered locus">HD_0719</name>
</gene>
<evidence type="ECO:0000255" key="1">
    <source>
        <dbReference type="HAMAP-Rule" id="MF_01813"/>
    </source>
</evidence>
<reference key="1">
    <citation type="submission" date="2003-06" db="EMBL/GenBank/DDBJ databases">
        <title>The complete genome sequence of Haemophilus ducreyi.</title>
        <authorList>
            <person name="Munson R.S. Jr."/>
            <person name="Ray W.C."/>
            <person name="Mahairas G."/>
            <person name="Sabo P."/>
            <person name="Mungur R."/>
            <person name="Johnson L."/>
            <person name="Nguyen D."/>
            <person name="Wang J."/>
            <person name="Forst C."/>
            <person name="Hood L."/>
        </authorList>
    </citation>
    <scope>NUCLEOTIDE SEQUENCE [LARGE SCALE GENOMIC DNA]</scope>
    <source>
        <strain>35000HP / ATCC 700724</strain>
    </source>
</reference>
<keyword id="KW-0474">Menaquinone biosynthesis</keyword>
<keyword id="KW-0489">Methyltransferase</keyword>
<keyword id="KW-1185">Reference proteome</keyword>
<keyword id="KW-0949">S-adenosyl-L-methionine</keyword>
<keyword id="KW-0808">Transferase</keyword>
<keyword id="KW-0831">Ubiquinone biosynthesis</keyword>
<sequence>MIKDTQSTAENQANETTHFGFKTVAKEEKQQLVANVFHSVAAKYDLMNDLLSFGIHRIWKRFTIDCSGVRKGQKVLDLAGGTGDFSAKFSRIVGETGQVVLADINSSMLEVGRDKLRNLGVVGNINYVQANAEHLPFADNTFDCVVISFGLRNVTDKDKALKSMYRVLKPGGRLLVLEFSKPIFDPISQLYNFYSFNILPKVGGIVVNDAESYRYLAESIRMHPKQDELKTMMEHAGFESVNYYNLSAGIVALHRGYKF</sequence>
<dbReference type="EC" id="2.1.1.163" evidence="1"/>
<dbReference type="EC" id="2.1.1.201" evidence="1"/>
<dbReference type="EMBL" id="AE017143">
    <property type="protein sequence ID" value="AAP95633.1"/>
    <property type="molecule type" value="Genomic_DNA"/>
</dbReference>
<dbReference type="RefSeq" id="WP_010944685.1">
    <property type="nucleotide sequence ID" value="NC_002940.2"/>
</dbReference>
<dbReference type="SMR" id="P59911"/>
<dbReference type="STRING" id="233412.HD_0719"/>
<dbReference type="KEGG" id="hdu:HD_0719"/>
<dbReference type="eggNOG" id="COG2226">
    <property type="taxonomic scope" value="Bacteria"/>
</dbReference>
<dbReference type="HOGENOM" id="CLU_037990_0_0_6"/>
<dbReference type="OrthoDB" id="9808140at2"/>
<dbReference type="UniPathway" id="UPA00079">
    <property type="reaction ID" value="UER00169"/>
</dbReference>
<dbReference type="UniPathway" id="UPA00232"/>
<dbReference type="Proteomes" id="UP000001022">
    <property type="component" value="Chromosome"/>
</dbReference>
<dbReference type="GO" id="GO:0008425">
    <property type="term" value="F:2-methoxy-6-polyprenyl-1,4-benzoquinol methyltransferase activity"/>
    <property type="evidence" value="ECO:0007669"/>
    <property type="project" value="UniProtKB-UniRule"/>
</dbReference>
<dbReference type="GO" id="GO:0043770">
    <property type="term" value="F:demethylmenaquinone methyltransferase activity"/>
    <property type="evidence" value="ECO:0007669"/>
    <property type="project" value="UniProtKB-UniRule"/>
</dbReference>
<dbReference type="GO" id="GO:0009060">
    <property type="term" value="P:aerobic respiration"/>
    <property type="evidence" value="ECO:0007669"/>
    <property type="project" value="UniProtKB-UniRule"/>
</dbReference>
<dbReference type="GO" id="GO:0009234">
    <property type="term" value="P:menaquinone biosynthetic process"/>
    <property type="evidence" value="ECO:0007669"/>
    <property type="project" value="UniProtKB-UniRule"/>
</dbReference>
<dbReference type="GO" id="GO:0032259">
    <property type="term" value="P:methylation"/>
    <property type="evidence" value="ECO:0007669"/>
    <property type="project" value="UniProtKB-KW"/>
</dbReference>
<dbReference type="CDD" id="cd02440">
    <property type="entry name" value="AdoMet_MTases"/>
    <property type="match status" value="1"/>
</dbReference>
<dbReference type="FunFam" id="3.40.50.150:FF:000014">
    <property type="entry name" value="Ubiquinone/menaquinone biosynthesis C-methyltransferase UbiE"/>
    <property type="match status" value="1"/>
</dbReference>
<dbReference type="Gene3D" id="3.40.50.150">
    <property type="entry name" value="Vaccinia Virus protein VP39"/>
    <property type="match status" value="1"/>
</dbReference>
<dbReference type="HAMAP" id="MF_01813">
    <property type="entry name" value="MenG_UbiE_methyltr"/>
    <property type="match status" value="1"/>
</dbReference>
<dbReference type="InterPro" id="IPR029063">
    <property type="entry name" value="SAM-dependent_MTases_sf"/>
</dbReference>
<dbReference type="InterPro" id="IPR004033">
    <property type="entry name" value="UbiE/COQ5_MeTrFase"/>
</dbReference>
<dbReference type="InterPro" id="IPR023576">
    <property type="entry name" value="UbiE/COQ5_MeTrFase_CS"/>
</dbReference>
<dbReference type="NCBIfam" id="TIGR01934">
    <property type="entry name" value="MenG_MenH_UbiE"/>
    <property type="match status" value="1"/>
</dbReference>
<dbReference type="NCBIfam" id="NF001240">
    <property type="entry name" value="PRK00216.1-1"/>
    <property type="match status" value="1"/>
</dbReference>
<dbReference type="NCBIfam" id="NF001242">
    <property type="entry name" value="PRK00216.1-3"/>
    <property type="match status" value="1"/>
</dbReference>
<dbReference type="NCBIfam" id="NF001244">
    <property type="entry name" value="PRK00216.1-5"/>
    <property type="match status" value="1"/>
</dbReference>
<dbReference type="PANTHER" id="PTHR43591:SF24">
    <property type="entry name" value="2-METHOXY-6-POLYPRENYL-1,4-BENZOQUINOL METHYLASE, MITOCHONDRIAL"/>
    <property type="match status" value="1"/>
</dbReference>
<dbReference type="PANTHER" id="PTHR43591">
    <property type="entry name" value="METHYLTRANSFERASE"/>
    <property type="match status" value="1"/>
</dbReference>
<dbReference type="Pfam" id="PF01209">
    <property type="entry name" value="Ubie_methyltran"/>
    <property type="match status" value="1"/>
</dbReference>
<dbReference type="SUPFAM" id="SSF53335">
    <property type="entry name" value="S-adenosyl-L-methionine-dependent methyltransferases"/>
    <property type="match status" value="1"/>
</dbReference>
<dbReference type="PROSITE" id="PS51608">
    <property type="entry name" value="SAM_MT_UBIE"/>
    <property type="match status" value="1"/>
</dbReference>
<dbReference type="PROSITE" id="PS01183">
    <property type="entry name" value="UBIE_1"/>
    <property type="match status" value="1"/>
</dbReference>
<dbReference type="PROSITE" id="PS01184">
    <property type="entry name" value="UBIE_2"/>
    <property type="match status" value="1"/>
</dbReference>
<comment type="function">
    <text evidence="1">Methyltransferase required for the conversion of demethylmenaquinol (DMKH2) to menaquinol (MKH2) and the conversion of 2-polyprenyl-6-methoxy-1,4-benzoquinol (DDMQH2) to 2-polyprenyl-3-methyl-6-methoxy-1,4-benzoquinol (DMQH2).</text>
</comment>
<comment type="catalytic activity">
    <reaction evidence="1">
        <text>a 2-demethylmenaquinol + S-adenosyl-L-methionine = a menaquinol + S-adenosyl-L-homocysteine + H(+)</text>
        <dbReference type="Rhea" id="RHEA:42640"/>
        <dbReference type="Rhea" id="RHEA-COMP:9539"/>
        <dbReference type="Rhea" id="RHEA-COMP:9563"/>
        <dbReference type="ChEBI" id="CHEBI:15378"/>
        <dbReference type="ChEBI" id="CHEBI:18151"/>
        <dbReference type="ChEBI" id="CHEBI:55437"/>
        <dbReference type="ChEBI" id="CHEBI:57856"/>
        <dbReference type="ChEBI" id="CHEBI:59789"/>
        <dbReference type="EC" id="2.1.1.163"/>
    </reaction>
</comment>
<comment type="catalytic activity">
    <reaction evidence="1">
        <text>a 2-methoxy-6-(all-trans-polyprenyl)benzene-1,4-diol + S-adenosyl-L-methionine = a 5-methoxy-2-methyl-3-(all-trans-polyprenyl)benzene-1,4-diol + S-adenosyl-L-homocysteine + H(+)</text>
        <dbReference type="Rhea" id="RHEA:28286"/>
        <dbReference type="Rhea" id="RHEA-COMP:10858"/>
        <dbReference type="Rhea" id="RHEA-COMP:10859"/>
        <dbReference type="ChEBI" id="CHEBI:15378"/>
        <dbReference type="ChEBI" id="CHEBI:57856"/>
        <dbReference type="ChEBI" id="CHEBI:59789"/>
        <dbReference type="ChEBI" id="CHEBI:84166"/>
        <dbReference type="ChEBI" id="CHEBI:84167"/>
        <dbReference type="EC" id="2.1.1.201"/>
    </reaction>
</comment>
<comment type="pathway">
    <text evidence="1">Quinol/quinone metabolism; menaquinone biosynthesis; menaquinol from 1,4-dihydroxy-2-naphthoate: step 2/2.</text>
</comment>
<comment type="pathway">
    <text evidence="1">Cofactor biosynthesis; ubiquinone biosynthesis.</text>
</comment>
<comment type="similarity">
    <text evidence="1">Belongs to the class I-like SAM-binding methyltransferase superfamily. MenG/UbiE family.</text>
</comment>
<feature type="chain" id="PRO_0000193281" description="Ubiquinone/menaquinone biosynthesis C-methyltransferase UbiE">
    <location>
        <begin position="1"/>
        <end position="259"/>
    </location>
</feature>
<feature type="binding site" evidence="1">
    <location>
        <position position="82"/>
    </location>
    <ligand>
        <name>S-adenosyl-L-methionine</name>
        <dbReference type="ChEBI" id="CHEBI:59789"/>
    </ligand>
</feature>
<feature type="binding site" evidence="1">
    <location>
        <position position="103"/>
    </location>
    <ligand>
        <name>S-adenosyl-L-methionine</name>
        <dbReference type="ChEBI" id="CHEBI:59789"/>
    </ligand>
</feature>
<feature type="binding site" evidence="1">
    <location>
        <begin position="131"/>
        <end position="132"/>
    </location>
    <ligand>
        <name>S-adenosyl-L-methionine</name>
        <dbReference type="ChEBI" id="CHEBI:59789"/>
    </ligand>
</feature>
<feature type="binding site" evidence="1">
    <location>
        <position position="148"/>
    </location>
    <ligand>
        <name>S-adenosyl-L-methionine</name>
        <dbReference type="ChEBI" id="CHEBI:59789"/>
    </ligand>
</feature>
<name>UBIE_HAEDU</name>